<feature type="chain" id="PRO_0000217587" description="Photosystem II reaction center protein M">
    <location>
        <begin position="1"/>
        <end position="34"/>
    </location>
</feature>
<feature type="transmembrane region" description="Helical" evidence="1">
    <location>
        <begin position="7"/>
        <end position="27"/>
    </location>
</feature>
<name>PSBM_PARMW</name>
<reference key="1">
    <citation type="journal article" date="2003" name="Nature">
        <title>The genome of a motile marine Synechococcus.</title>
        <authorList>
            <person name="Palenik B."/>
            <person name="Brahamsha B."/>
            <person name="Larimer F.W."/>
            <person name="Land M.L."/>
            <person name="Hauser L."/>
            <person name="Chain P."/>
            <person name="Lamerdin J.E."/>
            <person name="Regala W."/>
            <person name="Allen E.E."/>
            <person name="McCarren J."/>
            <person name="Paulsen I.T."/>
            <person name="Dufresne A."/>
            <person name="Partensky F."/>
            <person name="Webb E.A."/>
            <person name="Waterbury J."/>
        </authorList>
    </citation>
    <scope>NUCLEOTIDE SEQUENCE [LARGE SCALE GENOMIC DNA]</scope>
    <source>
        <strain>WH8102</strain>
    </source>
</reference>
<gene>
    <name evidence="1" type="primary">psbM</name>
    <name type="ordered locus">SYNW1980</name>
</gene>
<evidence type="ECO:0000255" key="1">
    <source>
        <dbReference type="HAMAP-Rule" id="MF_00438"/>
    </source>
</evidence>
<protein>
    <recommendedName>
        <fullName evidence="1">Photosystem II reaction center protein M</fullName>
        <shortName evidence="1">PSII-M</shortName>
    </recommendedName>
</protein>
<sequence length="34" mass="3757">METNDLGFVASLLFILVPAIFLIVLYIGTNRSES</sequence>
<comment type="function">
    <text evidence="1">One of the components of the core complex of photosystem II (PSII). PSII is a light-driven water:plastoquinone oxidoreductase that uses light energy to abstract electrons from H(2)O, generating O(2) and a proton gradient subsequently used for ATP formation. It consists of a core antenna complex that captures photons, and an electron transfer chain that converts photonic excitation into a charge separation. This subunit is found at the monomer-monomer interface.</text>
</comment>
<comment type="subunit">
    <text evidence="1">PSII is composed of 1 copy each of membrane proteins PsbA, PsbB, PsbC, PsbD, PsbE, PsbF, PsbH, PsbI, PsbJ, PsbK, PsbL, PsbM, PsbT, PsbX, PsbY, PsbZ, Psb30/Ycf12, peripheral proteins PsbO, CyanoQ (PsbQ), PsbU, PsbV and a large number of cofactors. It forms dimeric complexes.</text>
</comment>
<comment type="subcellular location">
    <subcellularLocation>
        <location evidence="1">Cellular thylakoid membrane</location>
        <topology evidence="1">Single-pass membrane protein</topology>
    </subcellularLocation>
</comment>
<comment type="similarity">
    <text evidence="1">Belongs to the PsbM family.</text>
</comment>
<organism>
    <name type="scientific">Parasynechococcus marenigrum (strain WH8102)</name>
    <dbReference type="NCBI Taxonomy" id="84588"/>
    <lineage>
        <taxon>Bacteria</taxon>
        <taxon>Bacillati</taxon>
        <taxon>Cyanobacteriota</taxon>
        <taxon>Cyanophyceae</taxon>
        <taxon>Synechococcales</taxon>
        <taxon>Prochlorococcaceae</taxon>
        <taxon>Parasynechococcus</taxon>
        <taxon>Parasynechococcus marenigrum</taxon>
    </lineage>
</organism>
<proteinExistence type="inferred from homology"/>
<dbReference type="EMBL" id="BX569694">
    <property type="protein sequence ID" value="CAE08495.1"/>
    <property type="molecule type" value="Genomic_DNA"/>
</dbReference>
<dbReference type="RefSeq" id="WP_011128838.1">
    <property type="nucleotide sequence ID" value="NC_005070.1"/>
</dbReference>
<dbReference type="SMR" id="Q7U4T3"/>
<dbReference type="STRING" id="84588.SYNW1980"/>
<dbReference type="KEGG" id="syw:SYNW1980"/>
<dbReference type="HOGENOM" id="CLU_215415_0_0_3"/>
<dbReference type="BioCyc" id="MetaCyc:TX72_RS09970-MONOMER"/>
<dbReference type="Proteomes" id="UP000001422">
    <property type="component" value="Chromosome"/>
</dbReference>
<dbReference type="GO" id="GO:0009523">
    <property type="term" value="C:photosystem II"/>
    <property type="evidence" value="ECO:0007669"/>
    <property type="project" value="UniProtKB-KW"/>
</dbReference>
<dbReference type="GO" id="GO:0031676">
    <property type="term" value="C:plasma membrane-derived thylakoid membrane"/>
    <property type="evidence" value="ECO:0007669"/>
    <property type="project" value="UniProtKB-SubCell"/>
</dbReference>
<dbReference type="GO" id="GO:0019684">
    <property type="term" value="P:photosynthesis, light reaction"/>
    <property type="evidence" value="ECO:0007669"/>
    <property type="project" value="InterPro"/>
</dbReference>
<dbReference type="HAMAP" id="MF_00438">
    <property type="entry name" value="PSII_PsbM"/>
    <property type="match status" value="1"/>
</dbReference>
<dbReference type="InterPro" id="IPR007826">
    <property type="entry name" value="PSII_PsbM"/>
</dbReference>
<dbReference type="InterPro" id="IPR037269">
    <property type="entry name" value="PSII_PsbM_sf"/>
</dbReference>
<dbReference type="NCBIfam" id="TIGR03038">
    <property type="entry name" value="PS_II_psbM"/>
    <property type="match status" value="1"/>
</dbReference>
<dbReference type="Pfam" id="PF05151">
    <property type="entry name" value="PsbM"/>
    <property type="match status" value="1"/>
</dbReference>
<dbReference type="SUPFAM" id="SSF161033">
    <property type="entry name" value="Photosystem II reaction center protein M, PsbM"/>
    <property type="match status" value="1"/>
</dbReference>
<accession>Q7U4T3</accession>
<keyword id="KW-0472">Membrane</keyword>
<keyword id="KW-0602">Photosynthesis</keyword>
<keyword id="KW-0604">Photosystem II</keyword>
<keyword id="KW-0674">Reaction center</keyword>
<keyword id="KW-0793">Thylakoid</keyword>
<keyword id="KW-0812">Transmembrane</keyword>
<keyword id="KW-1133">Transmembrane helix</keyword>